<keyword id="KW-0560">Oxidoreductase</keyword>
<keyword id="KW-0663">Pyridoxal phosphate</keyword>
<keyword id="KW-1185">Reference proteome</keyword>
<sequence length="972" mass="103927">MPNASPASPLNAPLAELEQRDAFIGRHVGPNATEIATMLAAVGAPDLDTLIDQTVPPAIRLAAPLPLEGPKPEHEALADLRAIAAKNVIRKSLIGMGYYGTHTPAVILRNVMENPGWYTAYTPYQAEIAQGRLEALLNYQQMVIDLTGLELANASLLDEATAAAEAMTMARRVAKSKSNVFYVDEACFPQTIDVLRTRAGLFGFELKFGPAHDAANADAFGALLQYPNERGEIIDLSGTVAALKAKGAVVAIASDLMALVLLKSPGTMGADIALGSAQRFGVPMGFGGPHAAFFATREANVRAMPGRIIGVSKDARGKTALRMTLQTREQHIRREKANSNICTSQVLLANMSGFYAVYHGPQGLRTIAARIHRLAAILAQGLRDAGFNVPAGAFFDTLQVDTGARTAELLAACDAAGFNLRPVSDTVLGLSVDETTTGDDVATLLRLFGASGELAALDAKVGAAGGAIPAALLRDDAILTHPVFNTHHTEHEMLRYLKKLQNRDLALDHSMISLGSCTMKLNATSEMIPITWAEFANLHPFAPREQVRGYLEMIDGLAGYLKAVTGFAAISMQPNSGAQGEYAGLVAIRRYHDSRGDTHRRVCLIPKSAHGTNPASAQMCGMDVVVVACDERGNVDLADLEAKVAQHADRLAALMITYPSTHGVFEESIREICASVHRHGGQVYMDGANLNAQVGLTSPATIGADVSHMNLHKTFCIPHGGGGPGMGPIGLAAHLAPFMADHVVAATGDETRPNKGQGAVSAAPFGSASILPISWMYIAMMGDTGLKLATEVAILNANYVANRLAEHYPVLYTGSQGRVAHECILDIRPIKANTGISEVDIAKRLMDYGFHAPTMSFPVAGTIMIEPTESEDLGELDRFIAAMITIRNEIREVENGAWPTDDNPLKNAPHTQADFIAADGAQWSRPYSREQAVFPLPWVAENKFWPSVNRIDDVYGDRNLFCACVPIEDYAS</sequence>
<evidence type="ECO:0000255" key="1">
    <source>
        <dbReference type="HAMAP-Rule" id="MF_00711"/>
    </source>
</evidence>
<accession>Q5NZ93</accession>
<proteinExistence type="inferred from homology"/>
<comment type="function">
    <text evidence="1">The glycine cleavage system catalyzes the degradation of glycine. The P protein binds the alpha-amino group of glycine through its pyridoxal phosphate cofactor; CO(2) is released and the remaining methylamine moiety is then transferred to the lipoamide cofactor of the H protein.</text>
</comment>
<comment type="catalytic activity">
    <reaction evidence="1">
        <text>N(6)-[(R)-lipoyl]-L-lysyl-[glycine-cleavage complex H protein] + glycine + H(+) = N(6)-[(R)-S(8)-aminomethyldihydrolipoyl]-L-lysyl-[glycine-cleavage complex H protein] + CO2</text>
        <dbReference type="Rhea" id="RHEA:24304"/>
        <dbReference type="Rhea" id="RHEA-COMP:10494"/>
        <dbReference type="Rhea" id="RHEA-COMP:10495"/>
        <dbReference type="ChEBI" id="CHEBI:15378"/>
        <dbReference type="ChEBI" id="CHEBI:16526"/>
        <dbReference type="ChEBI" id="CHEBI:57305"/>
        <dbReference type="ChEBI" id="CHEBI:83099"/>
        <dbReference type="ChEBI" id="CHEBI:83143"/>
        <dbReference type="EC" id="1.4.4.2"/>
    </reaction>
</comment>
<comment type="cofactor">
    <cofactor evidence="1">
        <name>pyridoxal 5'-phosphate</name>
        <dbReference type="ChEBI" id="CHEBI:597326"/>
    </cofactor>
</comment>
<comment type="subunit">
    <text evidence="1">The glycine cleavage system is composed of four proteins: P, T, L and H.</text>
</comment>
<comment type="similarity">
    <text evidence="1">Belongs to the GcvP family.</text>
</comment>
<dbReference type="EC" id="1.4.4.2" evidence="1"/>
<dbReference type="EMBL" id="CR555306">
    <property type="protein sequence ID" value="CAI09621.1"/>
    <property type="molecule type" value="Genomic_DNA"/>
</dbReference>
<dbReference type="RefSeq" id="WP_011239280.1">
    <property type="nucleotide sequence ID" value="NC_006513.1"/>
</dbReference>
<dbReference type="SMR" id="Q5NZ93"/>
<dbReference type="STRING" id="76114.ebA6124"/>
<dbReference type="KEGG" id="eba:ebA6124"/>
<dbReference type="eggNOG" id="COG0403">
    <property type="taxonomic scope" value="Bacteria"/>
</dbReference>
<dbReference type="eggNOG" id="COG1003">
    <property type="taxonomic scope" value="Bacteria"/>
</dbReference>
<dbReference type="HOGENOM" id="CLU_004620_3_2_4"/>
<dbReference type="OrthoDB" id="9801272at2"/>
<dbReference type="Proteomes" id="UP000006552">
    <property type="component" value="Chromosome"/>
</dbReference>
<dbReference type="GO" id="GO:0005829">
    <property type="term" value="C:cytosol"/>
    <property type="evidence" value="ECO:0007669"/>
    <property type="project" value="TreeGrafter"/>
</dbReference>
<dbReference type="GO" id="GO:0005960">
    <property type="term" value="C:glycine cleavage complex"/>
    <property type="evidence" value="ECO:0007669"/>
    <property type="project" value="TreeGrafter"/>
</dbReference>
<dbReference type="GO" id="GO:0016594">
    <property type="term" value="F:glycine binding"/>
    <property type="evidence" value="ECO:0007669"/>
    <property type="project" value="TreeGrafter"/>
</dbReference>
<dbReference type="GO" id="GO:0004375">
    <property type="term" value="F:glycine dehydrogenase (decarboxylating) activity"/>
    <property type="evidence" value="ECO:0007669"/>
    <property type="project" value="UniProtKB-EC"/>
</dbReference>
<dbReference type="GO" id="GO:0030170">
    <property type="term" value="F:pyridoxal phosphate binding"/>
    <property type="evidence" value="ECO:0007669"/>
    <property type="project" value="TreeGrafter"/>
</dbReference>
<dbReference type="GO" id="GO:0019464">
    <property type="term" value="P:glycine decarboxylation via glycine cleavage system"/>
    <property type="evidence" value="ECO:0007669"/>
    <property type="project" value="UniProtKB-UniRule"/>
</dbReference>
<dbReference type="CDD" id="cd00613">
    <property type="entry name" value="GDC-P"/>
    <property type="match status" value="2"/>
</dbReference>
<dbReference type="FunFam" id="3.40.640.10:FF:000005">
    <property type="entry name" value="Glycine dehydrogenase (decarboxylating), mitochondrial"/>
    <property type="match status" value="1"/>
</dbReference>
<dbReference type="FunFam" id="3.90.1150.10:FF:000007">
    <property type="entry name" value="Glycine dehydrogenase (decarboxylating), mitochondrial"/>
    <property type="match status" value="1"/>
</dbReference>
<dbReference type="FunFam" id="3.40.640.10:FF:000007">
    <property type="entry name" value="glycine dehydrogenase (Decarboxylating), mitochondrial"/>
    <property type="match status" value="1"/>
</dbReference>
<dbReference type="Gene3D" id="3.90.1150.10">
    <property type="entry name" value="Aspartate Aminotransferase, domain 1"/>
    <property type="match status" value="2"/>
</dbReference>
<dbReference type="Gene3D" id="3.40.640.10">
    <property type="entry name" value="Type I PLP-dependent aspartate aminotransferase-like (Major domain)"/>
    <property type="match status" value="2"/>
</dbReference>
<dbReference type="HAMAP" id="MF_00711">
    <property type="entry name" value="GcvP"/>
    <property type="match status" value="1"/>
</dbReference>
<dbReference type="InterPro" id="IPR003437">
    <property type="entry name" value="GcvP"/>
</dbReference>
<dbReference type="InterPro" id="IPR049316">
    <property type="entry name" value="GDC-P_C"/>
</dbReference>
<dbReference type="InterPro" id="IPR049315">
    <property type="entry name" value="GDC-P_N"/>
</dbReference>
<dbReference type="InterPro" id="IPR020581">
    <property type="entry name" value="GDC_P"/>
</dbReference>
<dbReference type="InterPro" id="IPR015424">
    <property type="entry name" value="PyrdxlP-dep_Trfase"/>
</dbReference>
<dbReference type="InterPro" id="IPR015421">
    <property type="entry name" value="PyrdxlP-dep_Trfase_major"/>
</dbReference>
<dbReference type="InterPro" id="IPR015422">
    <property type="entry name" value="PyrdxlP-dep_Trfase_small"/>
</dbReference>
<dbReference type="NCBIfam" id="TIGR00461">
    <property type="entry name" value="gcvP"/>
    <property type="match status" value="1"/>
</dbReference>
<dbReference type="NCBIfam" id="NF003346">
    <property type="entry name" value="PRK04366.1"/>
    <property type="match status" value="1"/>
</dbReference>
<dbReference type="PANTHER" id="PTHR11773:SF13">
    <property type="entry name" value="GLYCINE DEHYDROGENASE (DECARBOXYLATING)"/>
    <property type="match status" value="1"/>
</dbReference>
<dbReference type="PANTHER" id="PTHR11773">
    <property type="entry name" value="GLYCINE DEHYDROGENASE, DECARBOXYLATING"/>
    <property type="match status" value="1"/>
</dbReference>
<dbReference type="Pfam" id="PF21478">
    <property type="entry name" value="GcvP2_C"/>
    <property type="match status" value="1"/>
</dbReference>
<dbReference type="Pfam" id="PF02347">
    <property type="entry name" value="GDC-P"/>
    <property type="match status" value="2"/>
</dbReference>
<dbReference type="SUPFAM" id="SSF53383">
    <property type="entry name" value="PLP-dependent transferases"/>
    <property type="match status" value="2"/>
</dbReference>
<name>GCSP_AROAE</name>
<reference key="1">
    <citation type="journal article" date="2005" name="Arch. Microbiol.">
        <title>The genome sequence of an anaerobic aromatic-degrading denitrifying bacterium, strain EbN1.</title>
        <authorList>
            <person name="Rabus R."/>
            <person name="Kube M."/>
            <person name="Heider J."/>
            <person name="Beck A."/>
            <person name="Heitmann K."/>
            <person name="Widdel F."/>
            <person name="Reinhardt R."/>
        </authorList>
    </citation>
    <scope>NUCLEOTIDE SEQUENCE [LARGE SCALE GENOMIC DNA]</scope>
    <source>
        <strain>DSM 19018 / LMG 30748 / EbN1</strain>
    </source>
</reference>
<organism>
    <name type="scientific">Aromatoleum aromaticum (strain DSM 19018 / LMG 30748 / EbN1)</name>
    <name type="common">Azoarcus sp. (strain EbN1)</name>
    <dbReference type="NCBI Taxonomy" id="76114"/>
    <lineage>
        <taxon>Bacteria</taxon>
        <taxon>Pseudomonadati</taxon>
        <taxon>Pseudomonadota</taxon>
        <taxon>Betaproteobacteria</taxon>
        <taxon>Rhodocyclales</taxon>
        <taxon>Rhodocyclaceae</taxon>
        <taxon>Aromatoleum</taxon>
    </lineage>
</organism>
<feature type="chain" id="PRO_0000227090" description="Glycine dehydrogenase (decarboxylating)">
    <location>
        <begin position="1"/>
        <end position="972"/>
    </location>
</feature>
<feature type="modified residue" description="N6-(pyridoxal phosphate)lysine" evidence="1">
    <location>
        <position position="713"/>
    </location>
</feature>
<gene>
    <name evidence="1" type="primary">gcvP</name>
    <name type="ordered locus">AZOSEA34960</name>
    <name type="ORF">ebA6124</name>
</gene>
<protein>
    <recommendedName>
        <fullName evidence="1">Glycine dehydrogenase (decarboxylating)</fullName>
        <ecNumber evidence="1">1.4.4.2</ecNumber>
    </recommendedName>
    <alternativeName>
        <fullName evidence="1">Glycine cleavage system P-protein</fullName>
    </alternativeName>
    <alternativeName>
        <fullName evidence="1">Glycine decarboxylase</fullName>
    </alternativeName>
    <alternativeName>
        <fullName evidence="1">Glycine dehydrogenase (aminomethyl-transferring)</fullName>
    </alternativeName>
</protein>